<reference key="1">
    <citation type="journal article" date="2006" name="J. Bacteriol.">
        <title>Comparative genomic analysis of three strains of Ehrlichia ruminantium reveals an active process of genome size plasticity.</title>
        <authorList>
            <person name="Frutos R."/>
            <person name="Viari A."/>
            <person name="Ferraz C."/>
            <person name="Morgat A."/>
            <person name="Eychenie S."/>
            <person name="Kandassamy Y."/>
            <person name="Chantal I."/>
            <person name="Bensaid A."/>
            <person name="Coissac E."/>
            <person name="Vachiery N."/>
            <person name="Demaille J."/>
            <person name="Martinez D."/>
        </authorList>
    </citation>
    <scope>NUCLEOTIDE SEQUENCE [LARGE SCALE GENOMIC DNA]</scope>
    <source>
        <strain>Gardel</strain>
    </source>
</reference>
<organism>
    <name type="scientific">Ehrlichia ruminantium (strain Gardel)</name>
    <dbReference type="NCBI Taxonomy" id="302409"/>
    <lineage>
        <taxon>Bacteria</taxon>
        <taxon>Pseudomonadati</taxon>
        <taxon>Pseudomonadota</taxon>
        <taxon>Alphaproteobacteria</taxon>
        <taxon>Rickettsiales</taxon>
        <taxon>Anaplasmataceae</taxon>
        <taxon>Ehrlichia</taxon>
    </lineage>
</organism>
<proteinExistence type="inferred from homology"/>
<sequence>MDVVKKSRNTHGSNDFSELIVSVRRVAKVVKGGRRFSFSVLVVIGDEKGKVGCGIGKHLEVSEAKVKAVNAARKNMIRVHLRESRTLHHDIQAKFCSSKVMLRSAKVGTGIIAGGSIRLIFEVLGVQDVVAKSIGSSNPHNVVYAVFTAFRKMLSPKQVASKRSRKIGEIIENR</sequence>
<name>RS5_EHRRG</name>
<accession>Q5FFR5</accession>
<gene>
    <name evidence="1" type="primary">rpsE</name>
    <name type="ordered locus">ERGA_CDS_06120</name>
</gene>
<keyword id="KW-0687">Ribonucleoprotein</keyword>
<keyword id="KW-0689">Ribosomal protein</keyword>
<keyword id="KW-0694">RNA-binding</keyword>
<keyword id="KW-0699">rRNA-binding</keyword>
<comment type="function">
    <text evidence="1">With S4 and S12 plays an important role in translational accuracy.</text>
</comment>
<comment type="function">
    <text evidence="1">Located at the back of the 30S subunit body where it stabilizes the conformation of the head with respect to the body.</text>
</comment>
<comment type="subunit">
    <text evidence="1">Part of the 30S ribosomal subunit. Contacts proteins S4 and S8.</text>
</comment>
<comment type="domain">
    <text>The N-terminal domain interacts with the head of the 30S subunit; the C-terminal domain interacts with the body and contacts protein S4. The interaction surface between S4 and S5 is involved in control of translational fidelity.</text>
</comment>
<comment type="similarity">
    <text evidence="1">Belongs to the universal ribosomal protein uS5 family.</text>
</comment>
<comment type="sequence caution" evidence="2">
    <conflict type="erroneous initiation">
        <sequence resource="EMBL-CDS" id="CAI28064"/>
    </conflict>
</comment>
<dbReference type="EMBL" id="CR925677">
    <property type="protein sequence ID" value="CAI28064.1"/>
    <property type="status" value="ALT_INIT"/>
    <property type="molecule type" value="Genomic_DNA"/>
</dbReference>
<dbReference type="RefSeq" id="WP_011155272.1">
    <property type="nucleotide sequence ID" value="NC_006831.1"/>
</dbReference>
<dbReference type="SMR" id="Q5FFR5"/>
<dbReference type="GeneID" id="33057709"/>
<dbReference type="KEGG" id="erg:ERGA_CDS_06120"/>
<dbReference type="HOGENOM" id="CLU_065898_2_2_5"/>
<dbReference type="OrthoDB" id="9809045at2"/>
<dbReference type="Proteomes" id="UP000000533">
    <property type="component" value="Chromosome"/>
</dbReference>
<dbReference type="GO" id="GO:0015935">
    <property type="term" value="C:small ribosomal subunit"/>
    <property type="evidence" value="ECO:0007669"/>
    <property type="project" value="InterPro"/>
</dbReference>
<dbReference type="GO" id="GO:0019843">
    <property type="term" value="F:rRNA binding"/>
    <property type="evidence" value="ECO:0007669"/>
    <property type="project" value="UniProtKB-UniRule"/>
</dbReference>
<dbReference type="GO" id="GO:0003735">
    <property type="term" value="F:structural constituent of ribosome"/>
    <property type="evidence" value="ECO:0007669"/>
    <property type="project" value="InterPro"/>
</dbReference>
<dbReference type="GO" id="GO:0006412">
    <property type="term" value="P:translation"/>
    <property type="evidence" value="ECO:0007669"/>
    <property type="project" value="UniProtKB-UniRule"/>
</dbReference>
<dbReference type="FunFam" id="3.30.230.10:FF:000002">
    <property type="entry name" value="30S ribosomal protein S5"/>
    <property type="match status" value="1"/>
</dbReference>
<dbReference type="Gene3D" id="3.30.160.20">
    <property type="match status" value="1"/>
</dbReference>
<dbReference type="Gene3D" id="3.30.230.10">
    <property type="match status" value="1"/>
</dbReference>
<dbReference type="HAMAP" id="MF_01307_B">
    <property type="entry name" value="Ribosomal_uS5_B"/>
    <property type="match status" value="1"/>
</dbReference>
<dbReference type="InterPro" id="IPR020568">
    <property type="entry name" value="Ribosomal_Su5_D2-typ_SF"/>
</dbReference>
<dbReference type="InterPro" id="IPR000851">
    <property type="entry name" value="Ribosomal_uS5"/>
</dbReference>
<dbReference type="InterPro" id="IPR005712">
    <property type="entry name" value="Ribosomal_uS5_bac-type"/>
</dbReference>
<dbReference type="InterPro" id="IPR005324">
    <property type="entry name" value="Ribosomal_uS5_C"/>
</dbReference>
<dbReference type="InterPro" id="IPR013810">
    <property type="entry name" value="Ribosomal_uS5_N"/>
</dbReference>
<dbReference type="InterPro" id="IPR014721">
    <property type="entry name" value="Ribsml_uS5_D2-typ_fold_subgr"/>
</dbReference>
<dbReference type="NCBIfam" id="TIGR01021">
    <property type="entry name" value="rpsE_bact"/>
    <property type="match status" value="1"/>
</dbReference>
<dbReference type="PANTHER" id="PTHR48277">
    <property type="entry name" value="MITOCHONDRIAL RIBOSOMAL PROTEIN S5"/>
    <property type="match status" value="1"/>
</dbReference>
<dbReference type="PANTHER" id="PTHR48277:SF1">
    <property type="entry name" value="MITOCHONDRIAL RIBOSOMAL PROTEIN S5"/>
    <property type="match status" value="1"/>
</dbReference>
<dbReference type="Pfam" id="PF00333">
    <property type="entry name" value="Ribosomal_S5"/>
    <property type="match status" value="1"/>
</dbReference>
<dbReference type="Pfam" id="PF03719">
    <property type="entry name" value="Ribosomal_S5_C"/>
    <property type="match status" value="1"/>
</dbReference>
<dbReference type="SUPFAM" id="SSF54768">
    <property type="entry name" value="dsRNA-binding domain-like"/>
    <property type="match status" value="1"/>
</dbReference>
<dbReference type="SUPFAM" id="SSF54211">
    <property type="entry name" value="Ribosomal protein S5 domain 2-like"/>
    <property type="match status" value="1"/>
</dbReference>
<dbReference type="PROSITE" id="PS50881">
    <property type="entry name" value="S5_DSRBD"/>
    <property type="match status" value="1"/>
</dbReference>
<evidence type="ECO:0000255" key="1">
    <source>
        <dbReference type="HAMAP-Rule" id="MF_01307"/>
    </source>
</evidence>
<evidence type="ECO:0000305" key="2"/>
<protein>
    <recommendedName>
        <fullName evidence="1">Small ribosomal subunit protein uS5</fullName>
    </recommendedName>
    <alternativeName>
        <fullName evidence="2">30S ribosomal protein S5</fullName>
    </alternativeName>
</protein>
<feature type="chain" id="PRO_0000293198" description="Small ribosomal subunit protein uS5">
    <location>
        <begin position="1"/>
        <end position="174"/>
    </location>
</feature>
<feature type="domain" description="S5 DRBM" evidence="1">
    <location>
        <begin position="16"/>
        <end position="79"/>
    </location>
</feature>